<evidence type="ECO:0000255" key="1">
    <source>
        <dbReference type="HAMAP-Rule" id="MF_00375"/>
    </source>
</evidence>
<keyword id="KW-0963">Cytoplasm</keyword>
<keyword id="KW-0413">Isomerase</keyword>
<keyword id="KW-0627">Porphyrin biosynthesis</keyword>
<keyword id="KW-0663">Pyridoxal phosphate</keyword>
<accession>A3M7I8</accession>
<dbReference type="EC" id="5.4.3.8" evidence="1"/>
<dbReference type="EMBL" id="CP000521">
    <property type="protein sequence ID" value="ABO12882.2"/>
    <property type="molecule type" value="Genomic_DNA"/>
</dbReference>
<dbReference type="RefSeq" id="WP_000059223.1">
    <property type="nucleotide sequence ID" value="NZ_CP053098.1"/>
</dbReference>
<dbReference type="SMR" id="A3M7I8"/>
<dbReference type="KEGG" id="acb:A1S_2464"/>
<dbReference type="HOGENOM" id="CLU_016922_1_5_6"/>
<dbReference type="UniPathway" id="UPA00251">
    <property type="reaction ID" value="UER00317"/>
</dbReference>
<dbReference type="GO" id="GO:0005737">
    <property type="term" value="C:cytoplasm"/>
    <property type="evidence" value="ECO:0007669"/>
    <property type="project" value="UniProtKB-SubCell"/>
</dbReference>
<dbReference type="GO" id="GO:0042286">
    <property type="term" value="F:glutamate-1-semialdehyde 2,1-aminomutase activity"/>
    <property type="evidence" value="ECO:0007669"/>
    <property type="project" value="UniProtKB-UniRule"/>
</dbReference>
<dbReference type="GO" id="GO:0030170">
    <property type="term" value="F:pyridoxal phosphate binding"/>
    <property type="evidence" value="ECO:0007669"/>
    <property type="project" value="InterPro"/>
</dbReference>
<dbReference type="GO" id="GO:0008483">
    <property type="term" value="F:transaminase activity"/>
    <property type="evidence" value="ECO:0007669"/>
    <property type="project" value="InterPro"/>
</dbReference>
<dbReference type="GO" id="GO:0006782">
    <property type="term" value="P:protoporphyrinogen IX biosynthetic process"/>
    <property type="evidence" value="ECO:0007669"/>
    <property type="project" value="UniProtKB-UniRule"/>
</dbReference>
<dbReference type="CDD" id="cd00610">
    <property type="entry name" value="OAT_like"/>
    <property type="match status" value="1"/>
</dbReference>
<dbReference type="FunFam" id="3.40.640.10:FF:000021">
    <property type="entry name" value="Glutamate-1-semialdehyde 2,1-aminomutase"/>
    <property type="match status" value="1"/>
</dbReference>
<dbReference type="Gene3D" id="3.90.1150.10">
    <property type="entry name" value="Aspartate Aminotransferase, domain 1"/>
    <property type="match status" value="1"/>
</dbReference>
<dbReference type="Gene3D" id="3.40.640.10">
    <property type="entry name" value="Type I PLP-dependent aspartate aminotransferase-like (Major domain)"/>
    <property type="match status" value="1"/>
</dbReference>
<dbReference type="HAMAP" id="MF_00375">
    <property type="entry name" value="HemL_aminotrans_3"/>
    <property type="match status" value="1"/>
</dbReference>
<dbReference type="InterPro" id="IPR004639">
    <property type="entry name" value="4pyrrol_synth_GluAld_NH2Trfase"/>
</dbReference>
<dbReference type="InterPro" id="IPR005814">
    <property type="entry name" value="Aminotrans_3"/>
</dbReference>
<dbReference type="InterPro" id="IPR049704">
    <property type="entry name" value="Aminotrans_3_PPA_site"/>
</dbReference>
<dbReference type="InterPro" id="IPR015424">
    <property type="entry name" value="PyrdxlP-dep_Trfase"/>
</dbReference>
<dbReference type="InterPro" id="IPR015421">
    <property type="entry name" value="PyrdxlP-dep_Trfase_major"/>
</dbReference>
<dbReference type="InterPro" id="IPR015422">
    <property type="entry name" value="PyrdxlP-dep_Trfase_small"/>
</dbReference>
<dbReference type="NCBIfam" id="TIGR00713">
    <property type="entry name" value="hemL"/>
    <property type="match status" value="1"/>
</dbReference>
<dbReference type="NCBIfam" id="NF000818">
    <property type="entry name" value="PRK00062.1"/>
    <property type="match status" value="1"/>
</dbReference>
<dbReference type="PANTHER" id="PTHR43713">
    <property type="entry name" value="GLUTAMATE-1-SEMIALDEHYDE 2,1-AMINOMUTASE"/>
    <property type="match status" value="1"/>
</dbReference>
<dbReference type="PANTHER" id="PTHR43713:SF3">
    <property type="entry name" value="GLUTAMATE-1-SEMIALDEHYDE 2,1-AMINOMUTASE 1, CHLOROPLASTIC-RELATED"/>
    <property type="match status" value="1"/>
</dbReference>
<dbReference type="Pfam" id="PF00202">
    <property type="entry name" value="Aminotran_3"/>
    <property type="match status" value="1"/>
</dbReference>
<dbReference type="SUPFAM" id="SSF53383">
    <property type="entry name" value="PLP-dependent transferases"/>
    <property type="match status" value="1"/>
</dbReference>
<dbReference type="PROSITE" id="PS00600">
    <property type="entry name" value="AA_TRANSFER_CLASS_3"/>
    <property type="match status" value="1"/>
</dbReference>
<reference key="1">
    <citation type="journal article" date="2007" name="Genes Dev.">
        <title>New insights into Acinetobacter baumannii pathogenesis revealed by high-density pyrosequencing and transposon mutagenesis.</title>
        <authorList>
            <person name="Smith M.G."/>
            <person name="Gianoulis T.A."/>
            <person name="Pukatzki S."/>
            <person name="Mekalanos J.J."/>
            <person name="Ornston L.N."/>
            <person name="Gerstein M."/>
            <person name="Snyder M."/>
        </authorList>
    </citation>
    <scope>NUCLEOTIDE SEQUENCE [LARGE SCALE GENOMIC DNA]</scope>
    <source>
        <strain>ATCC 17978 / DSM 105126 / CIP 53.77 / LMG 1025 / NCDC KC755 / 5377</strain>
    </source>
</reference>
<proteinExistence type="inferred from homology"/>
<gene>
    <name evidence="1" type="primary">hemL</name>
    <name type="ordered locus">A1S_2464</name>
</gene>
<name>GSA_ACIBT</name>
<comment type="catalytic activity">
    <reaction evidence="1">
        <text>(S)-4-amino-5-oxopentanoate = 5-aminolevulinate</text>
        <dbReference type="Rhea" id="RHEA:14265"/>
        <dbReference type="ChEBI" id="CHEBI:57501"/>
        <dbReference type="ChEBI" id="CHEBI:356416"/>
        <dbReference type="EC" id="5.4.3.8"/>
    </reaction>
</comment>
<comment type="cofactor">
    <cofactor evidence="1">
        <name>pyridoxal 5'-phosphate</name>
        <dbReference type="ChEBI" id="CHEBI:597326"/>
    </cofactor>
</comment>
<comment type="pathway">
    <text evidence="1">Porphyrin-containing compound metabolism; protoporphyrin-IX biosynthesis; 5-aminolevulinate from L-glutamyl-tRNA(Glu): step 2/2.</text>
</comment>
<comment type="subunit">
    <text evidence="1">Homodimer.</text>
</comment>
<comment type="subcellular location">
    <subcellularLocation>
        <location evidence="1">Cytoplasm</location>
    </subcellularLocation>
</comment>
<comment type="similarity">
    <text evidence="1">Belongs to the class-III pyridoxal-phosphate-dependent aminotransferase family. HemL subfamily.</text>
</comment>
<protein>
    <recommendedName>
        <fullName evidence="1">Glutamate-1-semialdehyde 2,1-aminomutase</fullName>
        <shortName evidence="1">GSA</shortName>
        <ecNumber evidence="1">5.4.3.8</ecNumber>
    </recommendedName>
    <alternativeName>
        <fullName evidence="1">Glutamate-1-semialdehyde aminotransferase</fullName>
        <shortName evidence="1">GSA-AT</shortName>
    </alternativeName>
</protein>
<organism>
    <name type="scientific">Acinetobacter baumannii (strain ATCC 17978 / DSM 105126 / CIP 53.77 / LMG 1025 / NCDC KC755 / 5377)</name>
    <dbReference type="NCBI Taxonomy" id="400667"/>
    <lineage>
        <taxon>Bacteria</taxon>
        <taxon>Pseudomonadati</taxon>
        <taxon>Pseudomonadota</taxon>
        <taxon>Gammaproteobacteria</taxon>
        <taxon>Moraxellales</taxon>
        <taxon>Moraxellaceae</taxon>
        <taxon>Acinetobacter</taxon>
        <taxon>Acinetobacter calcoaceticus/baumannii complex</taxon>
    </lineage>
</organism>
<feature type="chain" id="PRO_1000121849" description="Glutamate-1-semialdehyde 2,1-aminomutase">
    <location>
        <begin position="1"/>
        <end position="432"/>
    </location>
</feature>
<feature type="modified residue" description="N6-(pyridoxal phosphate)lysine" evidence="1">
    <location>
        <position position="270"/>
    </location>
</feature>
<sequence>MSLSPKQEQLFKQASKHIPGGVNSPVRAFNGVGGTPVFIEKAKGAYLWDVDGKRYVDYVGSWGPMILGHAHPDIIKAVQTAAEDGLSFGAPTVHETTLADIICEIMPSIELVRMTNSGTEATMTAIRLARGYTGRDKIVKFEGCYHGHSDSLLVKAGSGLLTKGEGEPTSKGVPADFAKHTLTLPYNDIAALKECFAKFGHEIAGVIIEPVAGNMNMVKPIDGFLQAIRDVCDEYKSVFIIDEVMTGFRVALGGAQSVYNVKPDLTTLGKIIGAGLPVGAFGGKREIMECIAPLGGVYQAGTLSGNPLAMRAGIEMFKHLRQPDFYSKLSAQLEKLLAGLQAAADEAGIPFKTQQAGAMFGLYFTDQEDITSFDSMLACDIEAFKKFFHGMLKRGVNLAPSAFEAGFISSAHSDEDIEFTIQAAKETFAEMK</sequence>